<reference evidence="9" key="1">
    <citation type="journal article" date="2008" name="J. Biol. Chem.">
        <title>The new beta-D-glucosidase in terpenoid-isoquinoline alkaloid biosynthesis in Psychotria ipecacuanha.</title>
        <authorList>
            <person name="Nomura T."/>
            <person name="Quesada A.L."/>
            <person name="Kutchan T.M."/>
        </authorList>
    </citation>
    <scope>NUCLEOTIDE SEQUENCE [MRNA]</scope>
    <scope>FUNCTION</scope>
    <scope>CATALYTIC ACTIVITY</scope>
    <scope>PATHWAY</scope>
    <source>
        <tissue>Root</tissue>
        <tissue>Shoot</tissue>
    </source>
</reference>
<protein>
    <recommendedName>
        <fullName evidence="7">Ipecac alkaloid beta-glucosidase 9</fullName>
        <shortName evidence="7">IpeGLU9</shortName>
        <ecNumber evidence="6">3.2.1.-</ecNumber>
    </recommendedName>
</protein>
<evidence type="ECO:0000250" key="1">
    <source>
        <dbReference type="UniProtKB" id="B6ZKM3"/>
    </source>
</evidence>
<evidence type="ECO:0000250" key="2">
    <source>
        <dbReference type="UniProtKB" id="Q1XH05"/>
    </source>
</evidence>
<evidence type="ECO:0000250" key="3">
    <source>
        <dbReference type="UniProtKB" id="Q7XSK0"/>
    </source>
</evidence>
<evidence type="ECO:0000250" key="4">
    <source>
        <dbReference type="UniProtKB" id="Q8L7J2"/>
    </source>
</evidence>
<evidence type="ECO:0000250" key="5">
    <source>
        <dbReference type="UniProtKB" id="Q9SPP9"/>
    </source>
</evidence>
<evidence type="ECO:0000269" key="6">
    <source>
    </source>
</evidence>
<evidence type="ECO:0000303" key="7">
    <source>
    </source>
</evidence>
<evidence type="ECO:0000305" key="8"/>
<evidence type="ECO:0000312" key="9">
    <source>
        <dbReference type="EMBL" id="BAH02552.1"/>
    </source>
</evidence>
<name>GLU9_CARIP</name>
<accession>B6ZKN1</accession>
<organism>
    <name type="scientific">Carapichea ipecacuanha</name>
    <name type="common">Ipecac</name>
    <name type="synonym">Callicocca ipecacuanha</name>
    <dbReference type="NCBI Taxonomy" id="77880"/>
    <lineage>
        <taxon>Eukaryota</taxon>
        <taxon>Viridiplantae</taxon>
        <taxon>Streptophyta</taxon>
        <taxon>Embryophyta</taxon>
        <taxon>Tracheophyta</taxon>
        <taxon>Spermatophyta</taxon>
        <taxon>Magnoliopsida</taxon>
        <taxon>eudicotyledons</taxon>
        <taxon>Gunneridae</taxon>
        <taxon>Pentapetalae</taxon>
        <taxon>asterids</taxon>
        <taxon>lamiids</taxon>
        <taxon>Gentianales</taxon>
        <taxon>Rubiaceae</taxon>
        <taxon>Rubioideae</taxon>
        <taxon>Palicoureeae</taxon>
        <taxon>Carapichea</taxon>
    </lineage>
</organism>
<proteinExistence type="evidence at protein level"/>
<comment type="function">
    <text evidence="6">Beta-glucosidase catalyzing deglucosylation on N-deacetylisoipecoside and N-deacetylipecoside.</text>
</comment>
<comment type="catalytic activity">
    <reaction evidence="6">
        <text>deacetylipecoside + H2O = deacetylipecoside aglycone + D-glucose</text>
        <dbReference type="Rhea" id="RHEA:78763"/>
        <dbReference type="ChEBI" id="CHEBI:4167"/>
        <dbReference type="ChEBI" id="CHEBI:15377"/>
        <dbReference type="ChEBI" id="CHEBI:58379"/>
        <dbReference type="ChEBI" id="CHEBI:229554"/>
    </reaction>
    <physiologicalReaction direction="left-to-right" evidence="6">
        <dbReference type="Rhea" id="RHEA:78764"/>
    </physiologicalReaction>
</comment>
<comment type="catalytic activity">
    <reaction evidence="6">
        <text>deacetylisoipecoside + H2O = deacetylisoipecoside aglycone + D-glucose</text>
        <dbReference type="Rhea" id="RHEA:78887"/>
        <dbReference type="ChEBI" id="CHEBI:4167"/>
        <dbReference type="ChEBI" id="CHEBI:15377"/>
        <dbReference type="ChEBI" id="CHEBI:58091"/>
        <dbReference type="ChEBI" id="CHEBI:229557"/>
    </reaction>
    <physiologicalReaction direction="left-to-right" evidence="6">
        <dbReference type="Rhea" id="RHEA:78888"/>
    </physiologicalReaction>
</comment>
<comment type="pathway">
    <text evidence="6">Alkaloid biosynthesis.</text>
</comment>
<comment type="subcellular location">
    <subcellularLocation>
        <location evidence="1">Cytoplasm</location>
        <location evidence="1">Cytosol</location>
    </subcellularLocation>
</comment>
<comment type="similarity">
    <text evidence="8">Belongs to the glycosyl hydrolase 1 family.</text>
</comment>
<sequence>MSSVLPTPVLPTPGKNINRGHFPDDFIFGAGTSSYQIEGAAREGGRGPSIWDTFTHTHPELIQDGSNGDTAVNSYNLYKEDIKIVKLMGLDAYRFSISWPRILPGGSINAGINQEGIKYYNNLIDELLANDIVPYVTLFHWDVPQALQDQYDGFLSDKIVDDFRDFAELCFWEFGDRVKNWITINEPQSYSDFFGVAYDTPPKAHALKASRLLVPTTVARPSKPARVFASTADPGTTTADQVYKVGHNLLLAHAAALKVYRDNFQDTQEGTFGMALVTQWMKPLNENNPADVEAASRAFDFKFGWFMQPLITGEYPKSMRQSLGPRLREFTRDQKKLLIGSYDYVGVNYYTATYVSSARPPNDNKAIFHTDGNFYTTDCKDGVLIGPLAGPAWLNIVPEGIYRCLQEIKAKYNNPVIYITENGVYEVNDTTKTLSEARVDTTRVDYLQDHLSYVLKARQQGVRVQGYFVWSLMDNWELRAGYTSRFGLIHVDYYNNFARYPKDSAIWFRNAFHKRLRIHVNKRPQEDDGAFDTPRKRLKK</sequence>
<keyword id="KW-0017">Alkaloid metabolism</keyword>
<keyword id="KW-0963">Cytoplasm</keyword>
<keyword id="KW-0326">Glycosidase</keyword>
<keyword id="KW-0378">Hydrolase</keyword>
<feature type="chain" id="PRO_0000462225" description="Ipecac alkaloid beta-glucosidase 9">
    <location>
        <begin position="1"/>
        <end position="540"/>
    </location>
</feature>
<feature type="active site" description="Proton donor" evidence="3">
    <location>
        <position position="186"/>
    </location>
</feature>
<feature type="active site" description="Nucleophile" evidence="3">
    <location>
        <position position="421"/>
    </location>
</feature>
<feature type="binding site" evidence="5">
    <location>
        <position position="36"/>
    </location>
    <ligand>
        <name>a beta-D-glucoside</name>
        <dbReference type="ChEBI" id="CHEBI:22798"/>
    </ligand>
</feature>
<feature type="binding site" evidence="5">
    <location>
        <position position="140"/>
    </location>
    <ligand>
        <name>a beta-D-glucoside</name>
        <dbReference type="ChEBI" id="CHEBI:22798"/>
    </ligand>
</feature>
<feature type="binding site" evidence="5">
    <location>
        <begin position="185"/>
        <end position="186"/>
    </location>
    <ligand>
        <name>a beta-D-glucoside</name>
        <dbReference type="ChEBI" id="CHEBI:22798"/>
    </ligand>
</feature>
<feature type="binding site" evidence="4">
    <location>
        <position position="350"/>
    </location>
    <ligand>
        <name>a beta-D-glucoside</name>
        <dbReference type="ChEBI" id="CHEBI:22798"/>
    </ligand>
</feature>
<feature type="binding site" evidence="5">
    <location>
        <position position="421"/>
    </location>
    <ligand>
        <name>a beta-D-glucoside</name>
        <dbReference type="ChEBI" id="CHEBI:22798"/>
    </ligand>
</feature>
<feature type="binding site" evidence="5">
    <location>
        <position position="470"/>
    </location>
    <ligand>
        <name>a beta-D-glucoside</name>
        <dbReference type="ChEBI" id="CHEBI:22798"/>
    </ligand>
</feature>
<feature type="binding site" evidence="2">
    <location>
        <position position="486"/>
    </location>
    <ligand>
        <name>a beta-D-glucoside</name>
        <dbReference type="ChEBI" id="CHEBI:22798"/>
    </ligand>
</feature>
<feature type="site" description="Controls the gate shape and acceptance of substrates" evidence="5">
    <location>
        <position position="393"/>
    </location>
</feature>
<dbReference type="EC" id="3.2.1.-" evidence="6"/>
<dbReference type="EMBL" id="AB455584">
    <property type="protein sequence ID" value="BAH02552.1"/>
    <property type="molecule type" value="mRNA"/>
</dbReference>
<dbReference type="CAZy" id="GH1">
    <property type="family name" value="Glycoside Hydrolase Family 1"/>
</dbReference>
<dbReference type="GO" id="GO:0005829">
    <property type="term" value="C:cytosol"/>
    <property type="evidence" value="ECO:0000250"/>
    <property type="project" value="UniProtKB"/>
</dbReference>
<dbReference type="GO" id="GO:0008422">
    <property type="term" value="F:beta-glucosidase activity"/>
    <property type="evidence" value="ECO:0000314"/>
    <property type="project" value="UniProtKB"/>
</dbReference>
<dbReference type="GO" id="GO:0009251">
    <property type="term" value="P:glucan catabolic process"/>
    <property type="evidence" value="ECO:0000314"/>
    <property type="project" value="UniProtKB"/>
</dbReference>
<dbReference type="GO" id="GO:0033075">
    <property type="term" value="P:isoquinoline alkaloid biosynthetic process"/>
    <property type="evidence" value="ECO:0000314"/>
    <property type="project" value="UniProtKB"/>
</dbReference>
<dbReference type="FunFam" id="3.20.20.80:FF:000022">
    <property type="entry name" value="Beta-glucosidase 11"/>
    <property type="match status" value="1"/>
</dbReference>
<dbReference type="Gene3D" id="3.20.20.80">
    <property type="entry name" value="Glycosidases"/>
    <property type="match status" value="1"/>
</dbReference>
<dbReference type="InterPro" id="IPR001360">
    <property type="entry name" value="Glyco_hydro_1"/>
</dbReference>
<dbReference type="InterPro" id="IPR033132">
    <property type="entry name" value="Glyco_hydro_1_N_CS"/>
</dbReference>
<dbReference type="InterPro" id="IPR017853">
    <property type="entry name" value="Glycoside_hydrolase_SF"/>
</dbReference>
<dbReference type="PANTHER" id="PTHR10353">
    <property type="entry name" value="GLYCOSYL HYDROLASE"/>
    <property type="match status" value="1"/>
</dbReference>
<dbReference type="PANTHER" id="PTHR10353:SF137">
    <property type="entry name" value="MYROSINASE 3-RELATED"/>
    <property type="match status" value="1"/>
</dbReference>
<dbReference type="Pfam" id="PF00232">
    <property type="entry name" value="Glyco_hydro_1"/>
    <property type="match status" value="2"/>
</dbReference>
<dbReference type="PRINTS" id="PR00131">
    <property type="entry name" value="GLHYDRLASE1"/>
</dbReference>
<dbReference type="SUPFAM" id="SSF51445">
    <property type="entry name" value="(Trans)glycosidases"/>
    <property type="match status" value="1"/>
</dbReference>
<dbReference type="PROSITE" id="PS00653">
    <property type="entry name" value="GLYCOSYL_HYDROL_F1_2"/>
    <property type="match status" value="1"/>
</dbReference>
<gene>
    <name evidence="7" type="primary">GLU9</name>
</gene>